<protein>
    <recommendedName>
        <fullName evidence="1">NADH-quinone oxidoreductase subunit B</fullName>
        <ecNumber evidence="1">7.1.1.-</ecNumber>
    </recommendedName>
    <alternativeName>
        <fullName evidence="1">NADH dehydrogenase I subunit B</fullName>
    </alternativeName>
    <alternativeName>
        <fullName evidence="1">NDH-1 subunit B</fullName>
    </alternativeName>
</protein>
<name>NUOB_METI4</name>
<proteinExistence type="inferred from homology"/>
<comment type="function">
    <text evidence="1">NDH-1 shuttles electrons from NADH, via FMN and iron-sulfur (Fe-S) centers, to quinones in the respiratory chain. The immediate electron acceptor for the enzyme in this species is believed to be ubiquinone. Couples the redox reaction to proton translocation (for every two electrons transferred, four hydrogen ions are translocated across the cytoplasmic membrane), and thus conserves the redox energy in a proton gradient.</text>
</comment>
<comment type="catalytic activity">
    <reaction evidence="1">
        <text>a quinone + NADH + 5 H(+)(in) = a quinol + NAD(+) + 4 H(+)(out)</text>
        <dbReference type="Rhea" id="RHEA:57888"/>
        <dbReference type="ChEBI" id="CHEBI:15378"/>
        <dbReference type="ChEBI" id="CHEBI:24646"/>
        <dbReference type="ChEBI" id="CHEBI:57540"/>
        <dbReference type="ChEBI" id="CHEBI:57945"/>
        <dbReference type="ChEBI" id="CHEBI:132124"/>
    </reaction>
</comment>
<comment type="cofactor">
    <cofactor evidence="1">
        <name>[4Fe-4S] cluster</name>
        <dbReference type="ChEBI" id="CHEBI:49883"/>
    </cofactor>
    <text evidence="1">Binds 1 [4Fe-4S] cluster.</text>
</comment>
<comment type="subunit">
    <text evidence="1">NDH-1 is composed of 14 different subunits. Subunits NuoB, C, D, E, F, and G constitute the peripheral sector of the complex.</text>
</comment>
<comment type="subcellular location">
    <subcellularLocation>
        <location evidence="1">Cell inner membrane</location>
        <topology evidence="1">Peripheral membrane protein</topology>
        <orientation evidence="1">Cytoplasmic side</orientation>
    </subcellularLocation>
</comment>
<comment type="similarity">
    <text evidence="1">Belongs to the complex I 20 kDa subunit family.</text>
</comment>
<keyword id="KW-0004">4Fe-4S</keyword>
<keyword id="KW-0997">Cell inner membrane</keyword>
<keyword id="KW-1003">Cell membrane</keyword>
<keyword id="KW-0408">Iron</keyword>
<keyword id="KW-0411">Iron-sulfur</keyword>
<keyword id="KW-0472">Membrane</keyword>
<keyword id="KW-0479">Metal-binding</keyword>
<keyword id="KW-0520">NAD</keyword>
<keyword id="KW-0874">Quinone</keyword>
<keyword id="KW-1278">Translocase</keyword>
<keyword id="KW-0813">Transport</keyword>
<keyword id="KW-0830">Ubiquinone</keyword>
<organism>
    <name type="scientific">Methylacidiphilum infernorum (isolate V4)</name>
    <name type="common">Methylokorus infernorum (strain V4)</name>
    <dbReference type="NCBI Taxonomy" id="481448"/>
    <lineage>
        <taxon>Bacteria</taxon>
        <taxon>Pseudomonadati</taxon>
        <taxon>Verrucomicrobiota</taxon>
        <taxon>Methylacidiphilae</taxon>
        <taxon>Methylacidiphilales</taxon>
        <taxon>Methylacidiphilaceae</taxon>
        <taxon>Methylacidiphilum (ex Ratnadevi et al. 2023)</taxon>
    </lineage>
</organism>
<evidence type="ECO:0000255" key="1">
    <source>
        <dbReference type="HAMAP-Rule" id="MF_01356"/>
    </source>
</evidence>
<sequence length="170" mass="18895">MVQTKTLTYNSPIEGDVVVTRLDAAINWMRKNSLWPMPMGLACCAIELMASACARFDISRFGAEVMRFSPRQCDVMIVAGTVTYKMAYSVKRIYEQMPDPKWVISMGACASSGGMYRSYSVLQGIDQLIPVDVYVSGCPPRPEALLDALIKLQEKIDKEASLRRLKQSAA</sequence>
<feature type="chain" id="PRO_0000376266" description="NADH-quinone oxidoreductase subunit B">
    <location>
        <begin position="1"/>
        <end position="170"/>
    </location>
</feature>
<feature type="binding site" evidence="1">
    <location>
        <position position="43"/>
    </location>
    <ligand>
        <name>[4Fe-4S] cluster</name>
        <dbReference type="ChEBI" id="CHEBI:49883"/>
    </ligand>
</feature>
<feature type="binding site" evidence="1">
    <location>
        <position position="44"/>
    </location>
    <ligand>
        <name>[4Fe-4S] cluster</name>
        <dbReference type="ChEBI" id="CHEBI:49883"/>
    </ligand>
</feature>
<feature type="binding site" evidence="1">
    <location>
        <position position="109"/>
    </location>
    <ligand>
        <name>[4Fe-4S] cluster</name>
        <dbReference type="ChEBI" id="CHEBI:49883"/>
    </ligand>
</feature>
<feature type="binding site" evidence="1">
    <location>
        <position position="138"/>
    </location>
    <ligand>
        <name>[4Fe-4S] cluster</name>
        <dbReference type="ChEBI" id="CHEBI:49883"/>
    </ligand>
</feature>
<accession>B3DXN5</accession>
<reference key="1">
    <citation type="journal article" date="2008" name="Biol. Direct">
        <title>Complete genome sequence of the extremely acidophilic methanotroph isolate V4, Methylacidiphilum infernorum, a representative of the bacterial phylum Verrucomicrobia.</title>
        <authorList>
            <person name="Hou S."/>
            <person name="Makarova K.S."/>
            <person name="Saw J.H."/>
            <person name="Senin P."/>
            <person name="Ly B.V."/>
            <person name="Zhou Z."/>
            <person name="Ren Y."/>
            <person name="Wang J."/>
            <person name="Galperin M.Y."/>
            <person name="Omelchenko M.V."/>
            <person name="Wolf Y.I."/>
            <person name="Yutin N."/>
            <person name="Koonin E.V."/>
            <person name="Stott M.B."/>
            <person name="Mountain B.W."/>
            <person name="Crowe M.A."/>
            <person name="Smirnova A.V."/>
            <person name="Dunfield P.F."/>
            <person name="Feng L."/>
            <person name="Wang L."/>
            <person name="Alam M."/>
        </authorList>
    </citation>
    <scope>NUCLEOTIDE SEQUENCE [LARGE SCALE GENOMIC DNA]</scope>
    <source>
        <strain>Isolate V4</strain>
    </source>
</reference>
<dbReference type="EC" id="7.1.1.-" evidence="1"/>
<dbReference type="EMBL" id="CP000975">
    <property type="protein sequence ID" value="ACD82269.1"/>
    <property type="molecule type" value="Genomic_DNA"/>
</dbReference>
<dbReference type="RefSeq" id="WP_012462551.1">
    <property type="nucleotide sequence ID" value="NC_010794.1"/>
</dbReference>
<dbReference type="SMR" id="B3DXN5"/>
<dbReference type="STRING" id="481448.Minf_0209"/>
<dbReference type="KEGG" id="min:Minf_0209"/>
<dbReference type="eggNOG" id="COG0377">
    <property type="taxonomic scope" value="Bacteria"/>
</dbReference>
<dbReference type="HOGENOM" id="CLU_055737_7_3_0"/>
<dbReference type="OrthoDB" id="9786737at2"/>
<dbReference type="Proteomes" id="UP000009149">
    <property type="component" value="Chromosome"/>
</dbReference>
<dbReference type="GO" id="GO:0005886">
    <property type="term" value="C:plasma membrane"/>
    <property type="evidence" value="ECO:0007669"/>
    <property type="project" value="UniProtKB-SubCell"/>
</dbReference>
<dbReference type="GO" id="GO:0045271">
    <property type="term" value="C:respiratory chain complex I"/>
    <property type="evidence" value="ECO:0007669"/>
    <property type="project" value="TreeGrafter"/>
</dbReference>
<dbReference type="GO" id="GO:0051539">
    <property type="term" value="F:4 iron, 4 sulfur cluster binding"/>
    <property type="evidence" value="ECO:0007669"/>
    <property type="project" value="UniProtKB-KW"/>
</dbReference>
<dbReference type="GO" id="GO:0005506">
    <property type="term" value="F:iron ion binding"/>
    <property type="evidence" value="ECO:0007669"/>
    <property type="project" value="UniProtKB-UniRule"/>
</dbReference>
<dbReference type="GO" id="GO:0008137">
    <property type="term" value="F:NADH dehydrogenase (ubiquinone) activity"/>
    <property type="evidence" value="ECO:0007669"/>
    <property type="project" value="InterPro"/>
</dbReference>
<dbReference type="GO" id="GO:0050136">
    <property type="term" value="F:NADH:ubiquinone reductase (non-electrogenic) activity"/>
    <property type="evidence" value="ECO:0007669"/>
    <property type="project" value="UniProtKB-UniRule"/>
</dbReference>
<dbReference type="GO" id="GO:0048038">
    <property type="term" value="F:quinone binding"/>
    <property type="evidence" value="ECO:0007669"/>
    <property type="project" value="UniProtKB-KW"/>
</dbReference>
<dbReference type="GO" id="GO:0009060">
    <property type="term" value="P:aerobic respiration"/>
    <property type="evidence" value="ECO:0007669"/>
    <property type="project" value="TreeGrafter"/>
</dbReference>
<dbReference type="GO" id="GO:0015990">
    <property type="term" value="P:electron transport coupled proton transport"/>
    <property type="evidence" value="ECO:0007669"/>
    <property type="project" value="TreeGrafter"/>
</dbReference>
<dbReference type="FunFam" id="3.40.50.12280:FF:000002">
    <property type="entry name" value="NADH-quinone oxidoreductase subunit B"/>
    <property type="match status" value="1"/>
</dbReference>
<dbReference type="Gene3D" id="3.40.50.12280">
    <property type="match status" value="1"/>
</dbReference>
<dbReference type="HAMAP" id="MF_01356">
    <property type="entry name" value="NDH1_NuoB"/>
    <property type="match status" value="1"/>
</dbReference>
<dbReference type="InterPro" id="IPR006137">
    <property type="entry name" value="NADH_UbQ_OxRdtase-like_20kDa"/>
</dbReference>
<dbReference type="InterPro" id="IPR006138">
    <property type="entry name" value="NADH_UQ_OxRdtase_20Kd_su"/>
</dbReference>
<dbReference type="NCBIfam" id="TIGR01957">
    <property type="entry name" value="nuoB_fam"/>
    <property type="match status" value="1"/>
</dbReference>
<dbReference type="NCBIfam" id="NF005012">
    <property type="entry name" value="PRK06411.1"/>
    <property type="match status" value="1"/>
</dbReference>
<dbReference type="NCBIfam" id="NF011390">
    <property type="entry name" value="PRK14815.1"/>
    <property type="match status" value="1"/>
</dbReference>
<dbReference type="PANTHER" id="PTHR11995">
    <property type="entry name" value="NADH DEHYDROGENASE"/>
    <property type="match status" value="1"/>
</dbReference>
<dbReference type="PANTHER" id="PTHR11995:SF14">
    <property type="entry name" value="NADH DEHYDROGENASE [UBIQUINONE] IRON-SULFUR PROTEIN 7, MITOCHONDRIAL"/>
    <property type="match status" value="1"/>
</dbReference>
<dbReference type="Pfam" id="PF01058">
    <property type="entry name" value="Oxidored_q6"/>
    <property type="match status" value="1"/>
</dbReference>
<dbReference type="SUPFAM" id="SSF56770">
    <property type="entry name" value="HydA/Nqo6-like"/>
    <property type="match status" value="1"/>
</dbReference>
<gene>
    <name evidence="1" type="primary">nuoB</name>
    <name type="ordered locus">Minf_0209</name>
</gene>